<comment type="catalytic activity">
    <reaction evidence="1">
        <text>urea + 2 H2O + H(+) = hydrogencarbonate + 2 NH4(+)</text>
        <dbReference type="Rhea" id="RHEA:20557"/>
        <dbReference type="ChEBI" id="CHEBI:15377"/>
        <dbReference type="ChEBI" id="CHEBI:15378"/>
        <dbReference type="ChEBI" id="CHEBI:16199"/>
        <dbReference type="ChEBI" id="CHEBI:17544"/>
        <dbReference type="ChEBI" id="CHEBI:28938"/>
        <dbReference type="EC" id="3.5.1.5"/>
    </reaction>
</comment>
<comment type="pathway">
    <text evidence="1">Nitrogen metabolism; urea degradation; CO(2) and NH(3) from urea (urease route): step 1/1.</text>
</comment>
<comment type="subunit">
    <text evidence="1">Heterotrimer of UreA (gamma), UreB (beta) and UreC (alpha) subunits. Three heterotrimers associate to form the active enzyme.</text>
</comment>
<comment type="subcellular location">
    <subcellularLocation>
        <location evidence="1">Cytoplasm</location>
    </subcellularLocation>
</comment>
<comment type="similarity">
    <text evidence="1">Belongs to the urease beta subunit family.</text>
</comment>
<protein>
    <recommendedName>
        <fullName evidence="1">Urease subunit beta</fullName>
        <ecNumber evidence="1">3.5.1.5</ecNumber>
    </recommendedName>
    <alternativeName>
        <fullName evidence="1">Urea amidohydrolase subunit beta</fullName>
    </alternativeName>
</protein>
<name>URE2_BURA4</name>
<reference key="1">
    <citation type="submission" date="2008-04" db="EMBL/GenBank/DDBJ databases">
        <title>Complete sequence of chromosome 1 of Burkholderia ambifaria MC40-6.</title>
        <authorList>
            <person name="Copeland A."/>
            <person name="Lucas S."/>
            <person name="Lapidus A."/>
            <person name="Glavina del Rio T."/>
            <person name="Dalin E."/>
            <person name="Tice H."/>
            <person name="Pitluck S."/>
            <person name="Chain P."/>
            <person name="Malfatti S."/>
            <person name="Shin M."/>
            <person name="Vergez L."/>
            <person name="Lang D."/>
            <person name="Schmutz J."/>
            <person name="Larimer F."/>
            <person name="Land M."/>
            <person name="Hauser L."/>
            <person name="Kyrpides N."/>
            <person name="Lykidis A."/>
            <person name="Ramette A."/>
            <person name="Konstantinidis K."/>
            <person name="Tiedje J."/>
            <person name="Richardson P."/>
        </authorList>
    </citation>
    <scope>NUCLEOTIDE SEQUENCE [LARGE SCALE GENOMIC DNA]</scope>
    <source>
        <strain>MC40-6</strain>
    </source>
</reference>
<evidence type="ECO:0000255" key="1">
    <source>
        <dbReference type="HAMAP-Rule" id="MF_01954"/>
    </source>
</evidence>
<organism>
    <name type="scientific">Burkholderia ambifaria (strain MC40-6)</name>
    <dbReference type="NCBI Taxonomy" id="398577"/>
    <lineage>
        <taxon>Bacteria</taxon>
        <taxon>Pseudomonadati</taxon>
        <taxon>Pseudomonadota</taxon>
        <taxon>Betaproteobacteria</taxon>
        <taxon>Burkholderiales</taxon>
        <taxon>Burkholderiaceae</taxon>
        <taxon>Burkholderia</taxon>
        <taxon>Burkholderia cepacia complex</taxon>
    </lineage>
</organism>
<sequence>MIPGEILTDDGEHELNAGRPTLTVVVANTGDRPVQVGSHYHFFEANDALSFDRAAARGFRLNIAAGTAVRFEPGQTRTVELVELAGERAVYGFQGKVMGPL</sequence>
<feature type="chain" id="PRO_1000188913" description="Urease subunit beta">
    <location>
        <begin position="1"/>
        <end position="101"/>
    </location>
</feature>
<keyword id="KW-0963">Cytoplasm</keyword>
<keyword id="KW-0378">Hydrolase</keyword>
<accession>B1YUG0</accession>
<proteinExistence type="inferred from homology"/>
<dbReference type="EC" id="3.5.1.5" evidence="1"/>
<dbReference type="EMBL" id="CP001025">
    <property type="protein sequence ID" value="ACB63287.1"/>
    <property type="molecule type" value="Genomic_DNA"/>
</dbReference>
<dbReference type="RefSeq" id="WP_012363251.1">
    <property type="nucleotide sequence ID" value="NC_010551.1"/>
</dbReference>
<dbReference type="SMR" id="B1YUG0"/>
<dbReference type="KEGG" id="bac:BamMC406_0791"/>
<dbReference type="HOGENOM" id="CLU_129707_1_1_4"/>
<dbReference type="OrthoDB" id="9797217at2"/>
<dbReference type="UniPathway" id="UPA00258">
    <property type="reaction ID" value="UER00370"/>
</dbReference>
<dbReference type="Proteomes" id="UP000001680">
    <property type="component" value="Chromosome 1"/>
</dbReference>
<dbReference type="GO" id="GO:0035550">
    <property type="term" value="C:urease complex"/>
    <property type="evidence" value="ECO:0007669"/>
    <property type="project" value="InterPro"/>
</dbReference>
<dbReference type="GO" id="GO:0009039">
    <property type="term" value="F:urease activity"/>
    <property type="evidence" value="ECO:0007669"/>
    <property type="project" value="UniProtKB-UniRule"/>
</dbReference>
<dbReference type="GO" id="GO:0043419">
    <property type="term" value="P:urea catabolic process"/>
    <property type="evidence" value="ECO:0007669"/>
    <property type="project" value="UniProtKB-UniRule"/>
</dbReference>
<dbReference type="CDD" id="cd00407">
    <property type="entry name" value="Urease_beta"/>
    <property type="match status" value="1"/>
</dbReference>
<dbReference type="FunFam" id="2.10.150.10:FF:000001">
    <property type="entry name" value="Urease subunit beta"/>
    <property type="match status" value="1"/>
</dbReference>
<dbReference type="Gene3D" id="2.10.150.10">
    <property type="entry name" value="Urease, beta subunit"/>
    <property type="match status" value="1"/>
</dbReference>
<dbReference type="HAMAP" id="MF_01954">
    <property type="entry name" value="Urease_beta"/>
    <property type="match status" value="1"/>
</dbReference>
<dbReference type="InterPro" id="IPR002019">
    <property type="entry name" value="Urease_beta-like"/>
</dbReference>
<dbReference type="InterPro" id="IPR036461">
    <property type="entry name" value="Urease_betasu_sf"/>
</dbReference>
<dbReference type="InterPro" id="IPR050069">
    <property type="entry name" value="Urease_subunit"/>
</dbReference>
<dbReference type="NCBIfam" id="NF009682">
    <property type="entry name" value="PRK13203.1"/>
    <property type="match status" value="1"/>
</dbReference>
<dbReference type="NCBIfam" id="TIGR00192">
    <property type="entry name" value="urease_beta"/>
    <property type="match status" value="1"/>
</dbReference>
<dbReference type="PANTHER" id="PTHR33569">
    <property type="entry name" value="UREASE"/>
    <property type="match status" value="1"/>
</dbReference>
<dbReference type="PANTHER" id="PTHR33569:SF1">
    <property type="entry name" value="UREASE"/>
    <property type="match status" value="1"/>
</dbReference>
<dbReference type="Pfam" id="PF00699">
    <property type="entry name" value="Urease_beta"/>
    <property type="match status" value="1"/>
</dbReference>
<dbReference type="SUPFAM" id="SSF51278">
    <property type="entry name" value="Urease, beta-subunit"/>
    <property type="match status" value="1"/>
</dbReference>
<gene>
    <name evidence="1" type="primary">ureB</name>
    <name type="ordered locus">BamMC406_0791</name>
</gene>